<comment type="function">
    <text evidence="1">Forms the portal vertex of the capsid. This portal plays critical roles in head assembly, genome packaging, neck/tail attachment, and genome ejection. The portal protein multimerizes as a single ring-shaped homododecamer arranged around a central channel. Binds to the terminase subunits to form the packaging machine.</text>
</comment>
<comment type="subunit">
    <text evidence="1">Homododecamer. Interacts with the terminase complex composed of two small and one large terminase subunits.</text>
</comment>
<comment type="subcellular location">
    <subcellularLocation>
        <location evidence="1">Virion</location>
    </subcellularLocation>
</comment>
<comment type="PTM">
    <text evidence="1">Proteolytically cleaved by the viral protease during capsid maturation.</text>
</comment>
<comment type="similarity">
    <text evidence="1">Belongs to the siphoviridae portal protein family.</text>
</comment>
<sequence>MKRTPVLIDVNGVPLRESLSYNGGGAGFGGQMAEWLPPAQSADAALLPALRLGNARADDLVRNNGIAANAVALHKDHIVGHMFLISYRPNWRWLGMRETAAKSFVDEVEAAWSEYAEGMFGEIDVEGKRTFTEFIREGVGVHAFNGEIFVQPVWDTETTQLFRTRFKAVSPKRVDTPGHGMGNRFLRAGVEVDRYGRAVAYHICEDDFPFSGSGRWERIPRELPTGRPAMLHIFEPVEDGQTRGANQFYSVMERLKMLDSLQATQLQSAIVKAMYAATIESELDTEKAFEYIAGAPQEQKDNPLINILEKFSSWYDTNNVTLGGVKIPHLFPGDDLKLQTAQDSDNGFSALEQALLRYIAAGLGVSYEQLSRDYSKVSYSSARASANESWRYFMGRRKFIAARLATQMFSCWLEEALLRGIIRPPRARFDFYQARSAWSRAEWIGAGRMAIDGLKEVQESVMRIEAGLSTYEKGLALMGEDYQDIFRQQVRESAERQKAGLSRPVWIEQAYQQQIAESRRPEEETTPRET</sequence>
<name>PORTL_BPP21</name>
<proteinExistence type="inferred from homology"/>
<feature type="chain" id="PRO_0000077658" description="Portal protein B" evidence="1">
    <location>
        <begin position="1"/>
        <end position="530"/>
    </location>
</feature>
<dbReference type="EMBL" id="M81255">
    <property type="protein sequence ID" value="AAA32342.1"/>
    <property type="molecule type" value="Genomic_DNA"/>
</dbReference>
<dbReference type="SMR" id="P36272"/>
<dbReference type="GO" id="GO:0046798">
    <property type="term" value="C:viral portal complex"/>
    <property type="evidence" value="ECO:0007669"/>
    <property type="project" value="UniProtKB-UniRule"/>
</dbReference>
<dbReference type="GO" id="GO:0003677">
    <property type="term" value="F:DNA binding"/>
    <property type="evidence" value="ECO:0007669"/>
    <property type="project" value="UniProtKB-KW"/>
</dbReference>
<dbReference type="GO" id="GO:0005198">
    <property type="term" value="F:structural molecule activity"/>
    <property type="evidence" value="ECO:0007669"/>
    <property type="project" value="UniProtKB-UniRule"/>
</dbReference>
<dbReference type="GO" id="GO:0099001">
    <property type="term" value="P:symbiont genome ejection through host cell envelope, long flexible tail mechanism"/>
    <property type="evidence" value="ECO:0007669"/>
    <property type="project" value="UniProtKB-UniRule"/>
</dbReference>
<dbReference type="GO" id="GO:0019068">
    <property type="term" value="P:virion assembly"/>
    <property type="evidence" value="ECO:0007669"/>
    <property type="project" value="UniProtKB-UniRule"/>
</dbReference>
<dbReference type="HAMAP" id="MF_04135">
    <property type="entry name" value="PORTAL_LAMBDA"/>
    <property type="match status" value="1"/>
</dbReference>
<dbReference type="InterPro" id="IPR006429">
    <property type="entry name" value="Phage_lambda_portal"/>
</dbReference>
<dbReference type="NCBIfam" id="TIGR01539">
    <property type="entry name" value="portal_lambda"/>
    <property type="match status" value="1"/>
</dbReference>
<dbReference type="Pfam" id="PF05136">
    <property type="entry name" value="Phage_portal_2"/>
    <property type="match status" value="1"/>
</dbReference>
<protein>
    <recommendedName>
        <fullName evidence="1">Portal protein B</fullName>
    </recommendedName>
    <alternativeName>
        <fullName evidence="1">GpB</fullName>
    </alternativeName>
    <alternativeName>
        <fullName evidence="1">Minor capsid protein B</fullName>
    </alternativeName>
</protein>
<organism>
    <name type="scientific">Enterobacteria phage P21</name>
    <name type="common">Bacteriophage 21</name>
    <name type="synonym">Bacteriophage P21</name>
    <dbReference type="NCBI Taxonomy" id="10711"/>
    <lineage>
        <taxon>Viruses</taxon>
        <taxon>Duplodnaviria</taxon>
        <taxon>Heunggongvirae</taxon>
        <taxon>Uroviricota</taxon>
        <taxon>Caudoviricetes</taxon>
        <taxon>Lambdavirus</taxon>
        <taxon>Lambdavirus lambda</taxon>
    </lineage>
</organism>
<reference key="1">
    <citation type="journal article" date="1993" name="Gene">
        <title>Sequence analysis of the phage 21 genes for prohead assembly and head completion.</title>
        <authorList>
            <person name="Smith M.P."/>
            <person name="Feiss M."/>
        </authorList>
    </citation>
    <scope>NUCLEOTIDE SEQUENCE [GENOMIC DNA]</scope>
</reference>
<organismHost>
    <name type="scientific">Escherichia coli</name>
    <dbReference type="NCBI Taxonomy" id="562"/>
</organismHost>
<accession>P36272</accession>
<gene>
    <name evidence="1" type="primary">B</name>
    <name type="synonym">4</name>
</gene>
<evidence type="ECO:0000255" key="1">
    <source>
        <dbReference type="HAMAP-Rule" id="MF_04135"/>
    </source>
</evidence>
<keyword id="KW-0167">Capsid protein</keyword>
<keyword id="KW-0238">DNA-binding</keyword>
<keyword id="KW-0118">Viral capsid assembly</keyword>
<keyword id="KW-1171">Viral genome ejection through host cell envelope</keyword>
<keyword id="KW-0231">Viral genome packaging</keyword>
<keyword id="KW-1243">Viral long flexible tail ejection system</keyword>
<keyword id="KW-1162">Viral penetration into host cytoplasm</keyword>
<keyword id="KW-1188">Viral release from host cell</keyword>
<keyword id="KW-0946">Virion</keyword>
<keyword id="KW-1160">Virus entry into host cell</keyword>